<reference key="1">
    <citation type="journal article" date="2008" name="BMC Genomics">
        <title>The genome of Aeromonas salmonicida subsp. salmonicida A449: insights into the evolution of a fish pathogen.</title>
        <authorList>
            <person name="Reith M.E."/>
            <person name="Singh R.K."/>
            <person name="Curtis B."/>
            <person name="Boyd J.M."/>
            <person name="Bouevitch A."/>
            <person name="Kimball J."/>
            <person name="Munholland J."/>
            <person name="Murphy C."/>
            <person name="Sarty D."/>
            <person name="Williams J."/>
            <person name="Nash J.H."/>
            <person name="Johnson S.C."/>
            <person name="Brown L.L."/>
        </authorList>
    </citation>
    <scope>NUCLEOTIDE SEQUENCE [LARGE SCALE GENOMIC DNA]</scope>
    <source>
        <strain>A449</strain>
    </source>
</reference>
<gene>
    <name type="ordered locus">ASA_3628</name>
</gene>
<protein>
    <recommendedName>
        <fullName evidence="1">UPF0235 protein ASA_3628</fullName>
    </recommendedName>
</protein>
<feature type="chain" id="PRO_1000056757" description="UPF0235 protein ASA_3628">
    <location>
        <begin position="1"/>
        <end position="99"/>
    </location>
</feature>
<sequence>MPAVLREGDELILHLMIQPKASRDQIVGLHGDELKVAITAPPVDGQANSHLIKYLAKQFKVAKGQVRIVRGELGRHKTVAIESPRQIPAEIHALLETQG</sequence>
<dbReference type="EMBL" id="CP000644">
    <property type="protein sequence ID" value="ABO91589.1"/>
    <property type="molecule type" value="Genomic_DNA"/>
</dbReference>
<dbReference type="SMR" id="A4SRR7"/>
<dbReference type="STRING" id="29491.GCA_000820065_02483"/>
<dbReference type="KEGG" id="asa:ASA_3628"/>
<dbReference type="eggNOG" id="COG1872">
    <property type="taxonomic scope" value="Bacteria"/>
</dbReference>
<dbReference type="HOGENOM" id="CLU_130694_5_0_6"/>
<dbReference type="Proteomes" id="UP000000225">
    <property type="component" value="Chromosome"/>
</dbReference>
<dbReference type="GO" id="GO:0005737">
    <property type="term" value="C:cytoplasm"/>
    <property type="evidence" value="ECO:0007669"/>
    <property type="project" value="TreeGrafter"/>
</dbReference>
<dbReference type="Gene3D" id="3.30.1200.10">
    <property type="entry name" value="YggU-like"/>
    <property type="match status" value="1"/>
</dbReference>
<dbReference type="HAMAP" id="MF_00634">
    <property type="entry name" value="UPF0235"/>
    <property type="match status" value="1"/>
</dbReference>
<dbReference type="InterPro" id="IPR003746">
    <property type="entry name" value="DUF167"/>
</dbReference>
<dbReference type="InterPro" id="IPR036591">
    <property type="entry name" value="YggU-like_sf"/>
</dbReference>
<dbReference type="NCBIfam" id="TIGR00251">
    <property type="entry name" value="DUF167 family protein"/>
    <property type="match status" value="1"/>
</dbReference>
<dbReference type="NCBIfam" id="NF003466">
    <property type="entry name" value="PRK05090.1"/>
    <property type="match status" value="1"/>
</dbReference>
<dbReference type="PANTHER" id="PTHR13420">
    <property type="entry name" value="UPF0235 PROTEIN C15ORF40"/>
    <property type="match status" value="1"/>
</dbReference>
<dbReference type="PANTHER" id="PTHR13420:SF7">
    <property type="entry name" value="UPF0235 PROTEIN C15ORF40"/>
    <property type="match status" value="1"/>
</dbReference>
<dbReference type="Pfam" id="PF02594">
    <property type="entry name" value="DUF167"/>
    <property type="match status" value="1"/>
</dbReference>
<dbReference type="SMART" id="SM01152">
    <property type="entry name" value="DUF167"/>
    <property type="match status" value="1"/>
</dbReference>
<dbReference type="SUPFAM" id="SSF69786">
    <property type="entry name" value="YggU-like"/>
    <property type="match status" value="1"/>
</dbReference>
<organism>
    <name type="scientific">Aeromonas salmonicida (strain A449)</name>
    <dbReference type="NCBI Taxonomy" id="382245"/>
    <lineage>
        <taxon>Bacteria</taxon>
        <taxon>Pseudomonadati</taxon>
        <taxon>Pseudomonadota</taxon>
        <taxon>Gammaproteobacteria</taxon>
        <taxon>Aeromonadales</taxon>
        <taxon>Aeromonadaceae</taxon>
        <taxon>Aeromonas</taxon>
    </lineage>
</organism>
<evidence type="ECO:0000255" key="1">
    <source>
        <dbReference type="HAMAP-Rule" id="MF_00634"/>
    </source>
</evidence>
<proteinExistence type="inferred from homology"/>
<comment type="similarity">
    <text evidence="1">Belongs to the UPF0235 family.</text>
</comment>
<accession>A4SRR7</accession>
<name>Y3628_AERS4</name>